<name>CYB_GALLA</name>
<proteinExistence type="inferred from homology"/>
<gene>
    <name type="primary">MT-CYB</name>
    <name type="synonym">COB</name>
    <name type="synonym">CYTB</name>
    <name type="synonym">MTCYB</name>
</gene>
<comment type="function">
    <text evidence="2">Component of the ubiquinol-cytochrome c reductase complex (complex III or cytochrome b-c1 complex) that is part of the mitochondrial respiratory chain. The b-c1 complex mediates electron transfer from ubiquinol to cytochrome c. Contributes to the generation of a proton gradient across the mitochondrial membrane that is then used for ATP synthesis.</text>
</comment>
<comment type="cofactor">
    <cofactor evidence="2">
        <name>heme b</name>
        <dbReference type="ChEBI" id="CHEBI:60344"/>
    </cofactor>
    <text evidence="2">Binds 2 heme b groups non-covalently.</text>
</comment>
<comment type="subunit">
    <text evidence="2">The cytochrome bc1 complex contains 11 subunits: 3 respiratory subunits (MT-CYB, CYC1 and UQCRFS1), 2 core proteins (UQCRC1 and UQCRC2) and 6 low-molecular weight proteins (UQCRH/QCR6, UQCRB/QCR7, UQCRQ/QCR8, UQCR10/QCR9, UQCR11/QCR10 and a cleavage product of UQCRFS1). This cytochrome bc1 complex then forms a dimer.</text>
</comment>
<comment type="subcellular location">
    <subcellularLocation>
        <location evidence="2">Mitochondrion inner membrane</location>
        <topology evidence="2">Multi-pass membrane protein</topology>
    </subcellularLocation>
</comment>
<comment type="miscellaneous">
    <text evidence="1">Heme 1 (or BL or b562) is low-potential and absorbs at about 562 nm, and heme 2 (or BH or b566) is high-potential and absorbs at about 566 nm.</text>
</comment>
<comment type="similarity">
    <text evidence="3 4">Belongs to the cytochrome b family.</text>
</comment>
<comment type="caution">
    <text evidence="2">The full-length protein contains only eight transmembrane helices, not nine as predicted by bioinformatics tools.</text>
</comment>
<keyword id="KW-0249">Electron transport</keyword>
<keyword id="KW-0349">Heme</keyword>
<keyword id="KW-0408">Iron</keyword>
<keyword id="KW-0472">Membrane</keyword>
<keyword id="KW-0479">Metal-binding</keyword>
<keyword id="KW-0496">Mitochondrion</keyword>
<keyword id="KW-0999">Mitochondrion inner membrane</keyword>
<keyword id="KW-0679">Respiratory chain</keyword>
<keyword id="KW-0812">Transmembrane</keyword>
<keyword id="KW-1133">Transmembrane helix</keyword>
<keyword id="KW-0813">Transport</keyword>
<keyword id="KW-0830">Ubiquinone</keyword>
<accession>Q9XKC0</accession>
<accession>Q9B618</accession>
<geneLocation type="mitochondrion"/>
<dbReference type="EMBL" id="AB044990">
    <property type="protein sequence ID" value="BAB40347.1"/>
    <property type="molecule type" value="Genomic_DNA"/>
</dbReference>
<dbReference type="EMBL" id="AB022123">
    <property type="protein sequence ID" value="BAA82052.1"/>
    <property type="molecule type" value="Genomic_DNA"/>
</dbReference>
<dbReference type="SMR" id="Q9XKC0"/>
<dbReference type="GO" id="GO:0005743">
    <property type="term" value="C:mitochondrial inner membrane"/>
    <property type="evidence" value="ECO:0007669"/>
    <property type="project" value="UniProtKB-SubCell"/>
</dbReference>
<dbReference type="GO" id="GO:0045275">
    <property type="term" value="C:respiratory chain complex III"/>
    <property type="evidence" value="ECO:0007669"/>
    <property type="project" value="InterPro"/>
</dbReference>
<dbReference type="GO" id="GO:0046872">
    <property type="term" value="F:metal ion binding"/>
    <property type="evidence" value="ECO:0007669"/>
    <property type="project" value="UniProtKB-KW"/>
</dbReference>
<dbReference type="GO" id="GO:0008121">
    <property type="term" value="F:ubiquinol-cytochrome-c reductase activity"/>
    <property type="evidence" value="ECO:0007669"/>
    <property type="project" value="InterPro"/>
</dbReference>
<dbReference type="GO" id="GO:0006122">
    <property type="term" value="P:mitochondrial electron transport, ubiquinol to cytochrome c"/>
    <property type="evidence" value="ECO:0007669"/>
    <property type="project" value="TreeGrafter"/>
</dbReference>
<dbReference type="CDD" id="cd00290">
    <property type="entry name" value="cytochrome_b_C"/>
    <property type="match status" value="1"/>
</dbReference>
<dbReference type="CDD" id="cd00284">
    <property type="entry name" value="Cytochrome_b_N"/>
    <property type="match status" value="1"/>
</dbReference>
<dbReference type="FunFam" id="1.20.810.10:FF:000002">
    <property type="entry name" value="Cytochrome b"/>
    <property type="match status" value="1"/>
</dbReference>
<dbReference type="Gene3D" id="1.20.810.10">
    <property type="entry name" value="Cytochrome Bc1 Complex, Chain C"/>
    <property type="match status" value="1"/>
</dbReference>
<dbReference type="InterPro" id="IPR005798">
    <property type="entry name" value="Cyt_b/b6_C"/>
</dbReference>
<dbReference type="InterPro" id="IPR036150">
    <property type="entry name" value="Cyt_b/b6_C_sf"/>
</dbReference>
<dbReference type="InterPro" id="IPR005797">
    <property type="entry name" value="Cyt_b/b6_N"/>
</dbReference>
<dbReference type="InterPro" id="IPR027387">
    <property type="entry name" value="Cytb/b6-like_sf"/>
</dbReference>
<dbReference type="InterPro" id="IPR030689">
    <property type="entry name" value="Cytochrome_b"/>
</dbReference>
<dbReference type="InterPro" id="IPR048260">
    <property type="entry name" value="Cytochrome_b_C_euk/bac"/>
</dbReference>
<dbReference type="InterPro" id="IPR048259">
    <property type="entry name" value="Cytochrome_b_N_euk/bac"/>
</dbReference>
<dbReference type="InterPro" id="IPR016174">
    <property type="entry name" value="Di-haem_cyt_TM"/>
</dbReference>
<dbReference type="PANTHER" id="PTHR19271">
    <property type="entry name" value="CYTOCHROME B"/>
    <property type="match status" value="1"/>
</dbReference>
<dbReference type="PANTHER" id="PTHR19271:SF16">
    <property type="entry name" value="CYTOCHROME B"/>
    <property type="match status" value="1"/>
</dbReference>
<dbReference type="Pfam" id="PF00032">
    <property type="entry name" value="Cytochrom_B_C"/>
    <property type="match status" value="1"/>
</dbReference>
<dbReference type="Pfam" id="PF00033">
    <property type="entry name" value="Cytochrome_B"/>
    <property type="match status" value="1"/>
</dbReference>
<dbReference type="PIRSF" id="PIRSF038885">
    <property type="entry name" value="COB"/>
    <property type="match status" value="1"/>
</dbReference>
<dbReference type="SUPFAM" id="SSF81648">
    <property type="entry name" value="a domain/subunit of cytochrome bc1 complex (Ubiquinol-cytochrome c reductase)"/>
    <property type="match status" value="1"/>
</dbReference>
<dbReference type="SUPFAM" id="SSF81342">
    <property type="entry name" value="Transmembrane di-heme cytochromes"/>
    <property type="match status" value="1"/>
</dbReference>
<dbReference type="PROSITE" id="PS51003">
    <property type="entry name" value="CYTB_CTER"/>
    <property type="match status" value="1"/>
</dbReference>
<dbReference type="PROSITE" id="PS51002">
    <property type="entry name" value="CYTB_NTER"/>
    <property type="match status" value="1"/>
</dbReference>
<evidence type="ECO:0000250" key="1"/>
<evidence type="ECO:0000250" key="2">
    <source>
        <dbReference type="UniProtKB" id="P00157"/>
    </source>
</evidence>
<evidence type="ECO:0000255" key="3">
    <source>
        <dbReference type="PROSITE-ProRule" id="PRU00967"/>
    </source>
</evidence>
<evidence type="ECO:0000255" key="4">
    <source>
        <dbReference type="PROSITE-ProRule" id="PRU00968"/>
    </source>
</evidence>
<evidence type="ECO:0000305" key="5"/>
<reference key="1">
    <citation type="submission" date="2000-06" db="EMBL/GenBank/DDBJ databases">
        <title>Analysis of sequence in cytochrome b gene of genus Gallus.</title>
        <authorList>
            <person name="Nakaki S."/>
            <person name="Nishibori M."/>
            <person name="Yamamoto Y."/>
        </authorList>
    </citation>
    <scope>NUCLEOTIDE SEQUENCE [GENOMIC DNA]</scope>
</reference>
<reference key="2">
    <citation type="submission" date="1999-01" db="EMBL/GenBank/DDBJ databases">
        <title>Analysis of the chicken cytochrome b gene using restriction fragment polymorphism and nucleotide sequence.</title>
        <authorList>
            <person name="Nakaki S."/>
            <person name="Nishibori M."/>
            <person name="Yamamoto Y."/>
        </authorList>
    </citation>
    <scope>NUCLEOTIDE SEQUENCE [GENOMIC DNA] OF 57-267</scope>
</reference>
<protein>
    <recommendedName>
        <fullName>Cytochrome b</fullName>
    </recommendedName>
    <alternativeName>
        <fullName>Complex III subunit 3</fullName>
    </alternativeName>
    <alternativeName>
        <fullName>Complex III subunit III</fullName>
    </alternativeName>
    <alternativeName>
        <fullName>Cytochrome b-c1 complex subunit 3</fullName>
    </alternativeName>
    <alternativeName>
        <fullName>Ubiquinol-cytochrome-c reductase complex cytochrome b subunit</fullName>
    </alternativeName>
</protein>
<feature type="chain" id="PRO_0000060988" description="Cytochrome b">
    <location>
        <begin position="1"/>
        <end position="380"/>
    </location>
</feature>
<feature type="transmembrane region" description="Helical" evidence="2">
    <location>
        <begin position="34"/>
        <end position="54"/>
    </location>
</feature>
<feature type="transmembrane region" description="Helical" evidence="2">
    <location>
        <begin position="78"/>
        <end position="99"/>
    </location>
</feature>
<feature type="transmembrane region" description="Helical" evidence="2">
    <location>
        <begin position="114"/>
        <end position="134"/>
    </location>
</feature>
<feature type="transmembrane region" description="Helical" evidence="2">
    <location>
        <begin position="179"/>
        <end position="199"/>
    </location>
</feature>
<feature type="transmembrane region" description="Helical" evidence="2">
    <location>
        <begin position="227"/>
        <end position="247"/>
    </location>
</feature>
<feature type="transmembrane region" description="Helical" evidence="2">
    <location>
        <begin position="289"/>
        <end position="309"/>
    </location>
</feature>
<feature type="transmembrane region" description="Helical" evidence="2">
    <location>
        <begin position="321"/>
        <end position="341"/>
    </location>
</feature>
<feature type="transmembrane region" description="Helical" evidence="2">
    <location>
        <begin position="348"/>
        <end position="368"/>
    </location>
</feature>
<feature type="binding site" description="axial binding residue" evidence="2">
    <location>
        <position position="84"/>
    </location>
    <ligand>
        <name>heme b</name>
        <dbReference type="ChEBI" id="CHEBI:60344"/>
        <label>b562</label>
    </ligand>
    <ligandPart>
        <name>Fe</name>
        <dbReference type="ChEBI" id="CHEBI:18248"/>
    </ligandPart>
</feature>
<feature type="binding site" description="axial binding residue" evidence="2">
    <location>
        <position position="98"/>
    </location>
    <ligand>
        <name>heme b</name>
        <dbReference type="ChEBI" id="CHEBI:60344"/>
        <label>b566</label>
    </ligand>
    <ligandPart>
        <name>Fe</name>
        <dbReference type="ChEBI" id="CHEBI:18248"/>
    </ligandPart>
</feature>
<feature type="binding site" description="axial binding residue" evidence="2">
    <location>
        <position position="183"/>
    </location>
    <ligand>
        <name>heme b</name>
        <dbReference type="ChEBI" id="CHEBI:60344"/>
        <label>b562</label>
    </ligand>
    <ligandPart>
        <name>Fe</name>
        <dbReference type="ChEBI" id="CHEBI:18248"/>
    </ligandPart>
</feature>
<feature type="binding site" description="axial binding residue" evidence="2">
    <location>
        <position position="197"/>
    </location>
    <ligand>
        <name>heme b</name>
        <dbReference type="ChEBI" id="CHEBI:60344"/>
        <label>b566</label>
    </ligand>
    <ligandPart>
        <name>Fe</name>
        <dbReference type="ChEBI" id="CHEBI:18248"/>
    </ligandPart>
</feature>
<feature type="binding site" evidence="2">
    <location>
        <position position="202"/>
    </location>
    <ligand>
        <name>a ubiquinone</name>
        <dbReference type="ChEBI" id="CHEBI:16389"/>
    </ligand>
</feature>
<feature type="sequence conflict" description="In Ref. 2; BAA82052." evidence="5" ref="2">
    <original>R</original>
    <variation>G</variation>
    <location>
        <position position="178"/>
    </location>
</feature>
<sequence length="380" mass="42568">MAPNIRKSHPLLKMINNSLIDLPAPSNISAWWNFGSLLAVCLMTQILTGLLLAMHYTADTSLAFSSVAHTCRNVQYGWLIRNLHANGASFFFICIFLHIGRGLYYGSYLYKETWNTGVILLLTLMATAFVGYVLPWGQMSFWGATVITNLFSAIPYIGQTLVEWTWGGFSVDNPTLTRFFALHFLLPFAIAGITVVHLTFLHESGSNNPLGISSNSDKIPFHPYYSLKDILGLTLMLTPFLTLALFSPNLLGDPENFTPANPLVTPPHIKPEWYFLFAYAILRSIPNKLGGVLALAASVLILFLIPFLHKSKQRTMTFRPLSQTLFWLLVANLLILTWIGSQPVEHPFMIIGQMASLSYFTILLILFPTIGTLENKMLNY</sequence>
<organism>
    <name type="scientific">Gallus lafayettii</name>
    <name type="common">Sri Lanka junglefowl</name>
    <dbReference type="NCBI Taxonomy" id="9032"/>
    <lineage>
        <taxon>Eukaryota</taxon>
        <taxon>Metazoa</taxon>
        <taxon>Chordata</taxon>
        <taxon>Craniata</taxon>
        <taxon>Vertebrata</taxon>
        <taxon>Euteleostomi</taxon>
        <taxon>Archelosauria</taxon>
        <taxon>Archosauria</taxon>
        <taxon>Dinosauria</taxon>
        <taxon>Saurischia</taxon>
        <taxon>Theropoda</taxon>
        <taxon>Coelurosauria</taxon>
        <taxon>Aves</taxon>
        <taxon>Neognathae</taxon>
        <taxon>Galloanserae</taxon>
        <taxon>Galliformes</taxon>
        <taxon>Phasianidae</taxon>
        <taxon>Phasianinae</taxon>
        <taxon>Gallus</taxon>
    </lineage>
</organism>